<proteinExistence type="inferred from homology"/>
<organism>
    <name type="scientific">Bacillus anthracis</name>
    <dbReference type="NCBI Taxonomy" id="1392"/>
    <lineage>
        <taxon>Bacteria</taxon>
        <taxon>Bacillati</taxon>
        <taxon>Bacillota</taxon>
        <taxon>Bacilli</taxon>
        <taxon>Bacillales</taxon>
        <taxon>Bacillaceae</taxon>
        <taxon>Bacillus</taxon>
        <taxon>Bacillus cereus group</taxon>
    </lineage>
</organism>
<sequence>MTKNIHDVAYELQKAIAENDDFKTLKESYAAVQADAASKNLFDEFRTMQLSLQQKMMQGQEITEEDNQQAQEVVVRIQQDAKITKLMETEQRLNVVIGDVNKIIMKPLEELYSAQQQV</sequence>
<keyword id="KW-1185">Reference proteome</keyword>
<dbReference type="EMBL" id="AE016879">
    <property type="protein sequence ID" value="AAP24862.1"/>
    <property type="molecule type" value="Genomic_DNA"/>
</dbReference>
<dbReference type="EMBL" id="AE017334">
    <property type="protein sequence ID" value="AAT29975.1"/>
    <property type="molecule type" value="Genomic_DNA"/>
</dbReference>
<dbReference type="EMBL" id="AE017225">
    <property type="protein sequence ID" value="AAT53147.1"/>
    <property type="molecule type" value="Genomic_DNA"/>
</dbReference>
<dbReference type="RefSeq" id="NP_843376.1">
    <property type="nucleotide sequence ID" value="NC_003997.3"/>
</dbReference>
<dbReference type="RefSeq" id="WP_000164607.1">
    <property type="nucleotide sequence ID" value="NZ_WXXJ01000029.1"/>
</dbReference>
<dbReference type="RefSeq" id="YP_027096.1">
    <property type="nucleotide sequence ID" value="NC_005945.1"/>
</dbReference>
<dbReference type="SMR" id="Q81UK5"/>
<dbReference type="STRING" id="261594.GBAA_0863"/>
<dbReference type="DNASU" id="1083801"/>
<dbReference type="GeneID" id="45020930"/>
<dbReference type="KEGG" id="ban:BA_0863"/>
<dbReference type="KEGG" id="bar:GBAA_0863"/>
<dbReference type="KEGG" id="bat:BAS0820"/>
<dbReference type="PATRIC" id="fig|198094.11.peg.861"/>
<dbReference type="eggNOG" id="COG3679">
    <property type="taxonomic scope" value="Bacteria"/>
</dbReference>
<dbReference type="HOGENOM" id="CLU_140243_3_0_9"/>
<dbReference type="OMA" id="YDNANEM"/>
<dbReference type="OrthoDB" id="9811402at2"/>
<dbReference type="Proteomes" id="UP000000427">
    <property type="component" value="Chromosome"/>
</dbReference>
<dbReference type="Proteomes" id="UP000000594">
    <property type="component" value="Chromosome"/>
</dbReference>
<dbReference type="Gene3D" id="1.20.1500.10">
    <property type="entry name" value="YheA/YmcA-like"/>
    <property type="match status" value="1"/>
</dbReference>
<dbReference type="HAMAP" id="MF_01526">
    <property type="entry name" value="UPF0342"/>
    <property type="match status" value="1"/>
</dbReference>
<dbReference type="InterPro" id="IPR010368">
    <property type="entry name" value="Com_YlbF"/>
</dbReference>
<dbReference type="InterPro" id="IPR023378">
    <property type="entry name" value="YheA/YmcA-like_dom_sf"/>
</dbReference>
<dbReference type="NCBIfam" id="NF010211">
    <property type="entry name" value="PRK13676.1-4"/>
    <property type="match status" value="1"/>
</dbReference>
<dbReference type="Pfam" id="PF06133">
    <property type="entry name" value="Com_YlbF"/>
    <property type="match status" value="1"/>
</dbReference>
<dbReference type="SUPFAM" id="SSF158622">
    <property type="entry name" value="YheA/YmcA-like"/>
    <property type="match status" value="1"/>
</dbReference>
<comment type="similarity">
    <text evidence="1">Belongs to the UPF0342 family.</text>
</comment>
<accession>Q81UK5</accession>
<accession>Q6I2T4</accession>
<accession>Q6KWL5</accession>
<evidence type="ECO:0000255" key="1">
    <source>
        <dbReference type="HAMAP-Rule" id="MF_01526"/>
    </source>
</evidence>
<protein>
    <recommendedName>
        <fullName evidence="1">UPF0342 protein BA_0863/GBAA_0863/BAS0820</fullName>
    </recommendedName>
</protein>
<name>Y863_BACAN</name>
<feature type="chain" id="PRO_0000109963" description="UPF0342 protein BA_0863/GBAA_0863/BAS0820">
    <location>
        <begin position="1"/>
        <end position="118"/>
    </location>
</feature>
<reference key="1">
    <citation type="journal article" date="2003" name="Nature">
        <title>The genome sequence of Bacillus anthracis Ames and comparison to closely related bacteria.</title>
        <authorList>
            <person name="Read T.D."/>
            <person name="Peterson S.N."/>
            <person name="Tourasse N.J."/>
            <person name="Baillie L.W."/>
            <person name="Paulsen I.T."/>
            <person name="Nelson K.E."/>
            <person name="Tettelin H."/>
            <person name="Fouts D.E."/>
            <person name="Eisen J.A."/>
            <person name="Gill S.R."/>
            <person name="Holtzapple E.K."/>
            <person name="Okstad O.A."/>
            <person name="Helgason E."/>
            <person name="Rilstone J."/>
            <person name="Wu M."/>
            <person name="Kolonay J.F."/>
            <person name="Beanan M.J."/>
            <person name="Dodson R.J."/>
            <person name="Brinkac L.M."/>
            <person name="Gwinn M.L."/>
            <person name="DeBoy R.T."/>
            <person name="Madpu R."/>
            <person name="Daugherty S.C."/>
            <person name="Durkin A.S."/>
            <person name="Haft D.H."/>
            <person name="Nelson W.C."/>
            <person name="Peterson J.D."/>
            <person name="Pop M."/>
            <person name="Khouri H.M."/>
            <person name="Radune D."/>
            <person name="Benton J.L."/>
            <person name="Mahamoud Y."/>
            <person name="Jiang L."/>
            <person name="Hance I.R."/>
            <person name="Weidman J.F."/>
            <person name="Berry K.J."/>
            <person name="Plaut R.D."/>
            <person name="Wolf A.M."/>
            <person name="Watkins K.L."/>
            <person name="Nierman W.C."/>
            <person name="Hazen A."/>
            <person name="Cline R.T."/>
            <person name="Redmond C."/>
            <person name="Thwaite J.E."/>
            <person name="White O."/>
            <person name="Salzberg S.L."/>
            <person name="Thomason B."/>
            <person name="Friedlander A.M."/>
            <person name="Koehler T.M."/>
            <person name="Hanna P.C."/>
            <person name="Kolstoe A.-B."/>
            <person name="Fraser C.M."/>
        </authorList>
    </citation>
    <scope>NUCLEOTIDE SEQUENCE [LARGE SCALE GENOMIC DNA]</scope>
    <source>
        <strain>Ames / isolate Porton</strain>
    </source>
</reference>
<reference key="2">
    <citation type="journal article" date="2009" name="J. Bacteriol.">
        <title>The complete genome sequence of Bacillus anthracis Ames 'Ancestor'.</title>
        <authorList>
            <person name="Ravel J."/>
            <person name="Jiang L."/>
            <person name="Stanley S.T."/>
            <person name="Wilson M.R."/>
            <person name="Decker R.S."/>
            <person name="Read T.D."/>
            <person name="Worsham P."/>
            <person name="Keim P.S."/>
            <person name="Salzberg S.L."/>
            <person name="Fraser-Liggett C.M."/>
            <person name="Rasko D.A."/>
        </authorList>
    </citation>
    <scope>NUCLEOTIDE SEQUENCE [LARGE SCALE GENOMIC DNA]</scope>
    <source>
        <strain>Ames ancestor</strain>
    </source>
</reference>
<reference key="3">
    <citation type="submission" date="2004-01" db="EMBL/GenBank/DDBJ databases">
        <title>Complete genome sequence of Bacillus anthracis Sterne.</title>
        <authorList>
            <person name="Brettin T.S."/>
            <person name="Bruce D."/>
            <person name="Challacombe J.F."/>
            <person name="Gilna P."/>
            <person name="Han C."/>
            <person name="Hill K."/>
            <person name="Hitchcock P."/>
            <person name="Jackson P."/>
            <person name="Keim P."/>
            <person name="Longmire J."/>
            <person name="Lucas S."/>
            <person name="Okinaka R."/>
            <person name="Richardson P."/>
            <person name="Rubin E."/>
            <person name="Tice H."/>
        </authorList>
    </citation>
    <scope>NUCLEOTIDE SEQUENCE [LARGE SCALE GENOMIC DNA]</scope>
    <source>
        <strain>Sterne</strain>
    </source>
</reference>
<gene>
    <name type="ordered locus">BA_0863</name>
    <name type="ordered locus">GBAA_0863</name>
    <name type="ordered locus">BAS0820</name>
</gene>